<evidence type="ECO:0000305" key="1"/>
<organism>
    <name type="scientific">Priestia megaterium</name>
    <name type="common">Bacillus megaterium</name>
    <dbReference type="NCBI Taxonomy" id="1404"/>
    <lineage>
        <taxon>Bacteria</taxon>
        <taxon>Bacillati</taxon>
        <taxon>Bacillota</taxon>
        <taxon>Bacilli</taxon>
        <taxon>Bacillales</taxon>
        <taxon>Bacillaceae</taxon>
        <taxon>Priestia</taxon>
    </lineage>
</organism>
<name>SAS5_PRIMG</name>
<keyword id="KW-0238">DNA-binding</keyword>
<keyword id="KW-0749">Sporulation</keyword>
<comment type="function">
    <text>SASP are bound to spore DNA. They are double-stranded DNA-binding proteins that cause DNA to change to an a-like conformation. They protect the DNA backbone from chemical and enzymatic cleavage and are thus involved in dormant spore's high resistance to UV light.</text>
</comment>
<comment type="miscellaneous">
    <text>SASP are degraded in the first minutes of spore germination and provide amino acids for both new protein synthesis and metabolism.</text>
</comment>
<comment type="similarity">
    <text evidence="1">Belongs to the alpha/beta-type SASP family.</text>
</comment>
<feature type="chain" id="PRO_0000196298" description="Small, acid-soluble spore protein C5">
    <location>
        <begin position="1"/>
        <end position="73"/>
    </location>
</feature>
<feature type="site" description="Cleavage; by spore protease">
    <location>
        <begin position="27"/>
        <end position="28"/>
    </location>
</feature>
<protein>
    <recommendedName>
        <fullName>Small, acid-soluble spore protein C5</fullName>
        <shortName>SASP</shortName>
    </recommendedName>
</protein>
<gene>
    <name type="primary">SASP-C5</name>
</gene>
<reference key="1">
    <citation type="journal article" date="1986" name="J. Bacteriol.">
        <title>Genes for Bacillus megaterium small, acid-soluble spore proteins: cloning and nucleotide sequence of three additional genes from this multigene family.</title>
        <authorList>
            <person name="Fliss E.R."/>
            <person name="Loshon C.A."/>
            <person name="Setlow P."/>
        </authorList>
    </citation>
    <scope>NUCLEOTIDE SEQUENCE [GENOMIC DNA]</scope>
</reference>
<dbReference type="EMBL" id="M14111">
    <property type="protein sequence ID" value="AAA22284.1"/>
    <property type="molecule type" value="Genomic_DNA"/>
</dbReference>
<dbReference type="PIR" id="C24543">
    <property type="entry name" value="C24543"/>
</dbReference>
<dbReference type="SMR" id="P04835"/>
<dbReference type="STRING" id="1348908.GCA_000480335_02088"/>
<dbReference type="GO" id="GO:0003690">
    <property type="term" value="F:double-stranded DNA binding"/>
    <property type="evidence" value="ECO:0007669"/>
    <property type="project" value="InterPro"/>
</dbReference>
<dbReference type="GO" id="GO:0006265">
    <property type="term" value="P:DNA topological change"/>
    <property type="evidence" value="ECO:0007669"/>
    <property type="project" value="InterPro"/>
</dbReference>
<dbReference type="GO" id="GO:0030435">
    <property type="term" value="P:sporulation resulting in formation of a cellular spore"/>
    <property type="evidence" value="ECO:0007669"/>
    <property type="project" value="UniProtKB-KW"/>
</dbReference>
<dbReference type="Gene3D" id="6.10.10.80">
    <property type="entry name" value="Small, acid-soluble spore protein, alpha/beta type-like"/>
    <property type="match status" value="1"/>
</dbReference>
<dbReference type="InterPro" id="IPR001448">
    <property type="entry name" value="SASP_alpha/beta-type"/>
</dbReference>
<dbReference type="InterPro" id="IPR018126">
    <property type="entry name" value="SASP_alpha/beta-type_CS"/>
</dbReference>
<dbReference type="InterPro" id="IPR050847">
    <property type="entry name" value="SASP_DNA-binding"/>
</dbReference>
<dbReference type="InterPro" id="IPR038300">
    <property type="entry name" value="SASP_sf_alpha/beta"/>
</dbReference>
<dbReference type="PANTHER" id="PTHR36107">
    <property type="entry name" value="SMALL, ACID-SOLUBLE SPORE PROTEIN A"/>
    <property type="match status" value="1"/>
</dbReference>
<dbReference type="PANTHER" id="PTHR36107:SF1">
    <property type="entry name" value="SMALL, ACID-SOLUBLE SPORE PROTEIN A"/>
    <property type="match status" value="1"/>
</dbReference>
<dbReference type="Pfam" id="PF00269">
    <property type="entry name" value="SASP"/>
    <property type="match status" value="1"/>
</dbReference>
<dbReference type="PROSITE" id="PS00304">
    <property type="entry name" value="SASP_1"/>
    <property type="match status" value="1"/>
</dbReference>
<dbReference type="PROSITE" id="PS00684">
    <property type="entry name" value="SASP_2"/>
    <property type="match status" value="1"/>
</dbReference>
<proteinExistence type="inferred from homology"/>
<accession>P04835</accession>
<sequence>MANSRNKSSNELAVHGAQQAIDQMKYEIASEFGVTLGPDTTARANGSVGGEITKRLVQMAEQQLGGGRSKSLS</sequence>